<evidence type="ECO:0000250" key="1"/>
<evidence type="ECO:0000255" key="2">
    <source>
        <dbReference type="HAMAP-Rule" id="MF_00729"/>
    </source>
</evidence>
<accession>Q6G670</accession>
<proteinExistence type="inferred from homology"/>
<dbReference type="EC" id="4.1.2.13" evidence="2"/>
<dbReference type="EMBL" id="BX571857">
    <property type="protein sequence ID" value="CAG44307.1"/>
    <property type="molecule type" value="Genomic_DNA"/>
</dbReference>
<dbReference type="RefSeq" id="WP_001031405.1">
    <property type="nucleotide sequence ID" value="NC_002953.3"/>
</dbReference>
<dbReference type="SMR" id="Q6G670"/>
<dbReference type="KEGG" id="sas:SAS2491"/>
<dbReference type="HOGENOM" id="CLU_081560_0_0_9"/>
<dbReference type="UniPathway" id="UPA00109">
    <property type="reaction ID" value="UER00183"/>
</dbReference>
<dbReference type="GO" id="GO:0004332">
    <property type="term" value="F:fructose-bisphosphate aldolase activity"/>
    <property type="evidence" value="ECO:0007669"/>
    <property type="project" value="UniProtKB-UniRule"/>
</dbReference>
<dbReference type="GO" id="GO:0006096">
    <property type="term" value="P:glycolytic process"/>
    <property type="evidence" value="ECO:0007669"/>
    <property type="project" value="UniProtKB-UniRule"/>
</dbReference>
<dbReference type="Gene3D" id="3.20.20.70">
    <property type="entry name" value="Aldolase class I"/>
    <property type="match status" value="1"/>
</dbReference>
<dbReference type="HAMAP" id="MF_00729">
    <property type="entry name" value="FBP_aldolase_1"/>
    <property type="match status" value="1"/>
</dbReference>
<dbReference type="InterPro" id="IPR013785">
    <property type="entry name" value="Aldolase_TIM"/>
</dbReference>
<dbReference type="InterPro" id="IPR000741">
    <property type="entry name" value="FBA_I"/>
</dbReference>
<dbReference type="InterPro" id="IPR023014">
    <property type="entry name" value="FBA_I_Gram+-type"/>
</dbReference>
<dbReference type="NCBIfam" id="NF003784">
    <property type="entry name" value="PRK05377.1"/>
    <property type="match status" value="1"/>
</dbReference>
<dbReference type="PANTHER" id="PTHR11627">
    <property type="entry name" value="FRUCTOSE-BISPHOSPHATE ALDOLASE"/>
    <property type="match status" value="1"/>
</dbReference>
<dbReference type="Pfam" id="PF00274">
    <property type="entry name" value="Glycolytic"/>
    <property type="match status" value="1"/>
</dbReference>
<dbReference type="SUPFAM" id="SSF51569">
    <property type="entry name" value="Aldolase"/>
    <property type="match status" value="1"/>
</dbReference>
<name>ALF1_STAAS</name>
<sequence>MNKEQLEKMKNGKGFIAALDQSGGSTPKALKEYGVNEDQYSNEDEMFQLVHDMRTRVVTSPSFSPDKILGAILFEQTMDREVEGKYTADYLADKGVVPFLKVDKGLAEEQNGVQLMKPIDNLDSLLDRANERHIFGTKMRSNILELNEQGIKDVVEQQFEVAKQIIAKGLVPIIEPEVNINAKDKAEIEKVLKAELKKGLDNLNADQLVMLKLTIPTEPNLYKELAEHPNVVRVVVLSGGYSREKANELLKDNAELIASFSRALASDLRAGQSKEEFDKALGDAVESIYDASVNKN</sequence>
<organism>
    <name type="scientific">Staphylococcus aureus (strain MSSA476)</name>
    <dbReference type="NCBI Taxonomy" id="282459"/>
    <lineage>
        <taxon>Bacteria</taxon>
        <taxon>Bacillati</taxon>
        <taxon>Bacillota</taxon>
        <taxon>Bacilli</taxon>
        <taxon>Bacillales</taxon>
        <taxon>Staphylococcaceae</taxon>
        <taxon>Staphylococcus</taxon>
    </lineage>
</organism>
<reference key="1">
    <citation type="journal article" date="2004" name="Proc. Natl. Acad. Sci. U.S.A.">
        <title>Complete genomes of two clinical Staphylococcus aureus strains: evidence for the rapid evolution of virulence and drug resistance.</title>
        <authorList>
            <person name="Holden M.T.G."/>
            <person name="Feil E.J."/>
            <person name="Lindsay J.A."/>
            <person name="Peacock S.J."/>
            <person name="Day N.P.J."/>
            <person name="Enright M.C."/>
            <person name="Foster T.J."/>
            <person name="Moore C.E."/>
            <person name="Hurst L."/>
            <person name="Atkin R."/>
            <person name="Barron A."/>
            <person name="Bason N."/>
            <person name="Bentley S.D."/>
            <person name="Chillingworth C."/>
            <person name="Chillingworth T."/>
            <person name="Churcher C."/>
            <person name="Clark L."/>
            <person name="Corton C."/>
            <person name="Cronin A."/>
            <person name="Doggett J."/>
            <person name="Dowd L."/>
            <person name="Feltwell T."/>
            <person name="Hance Z."/>
            <person name="Harris B."/>
            <person name="Hauser H."/>
            <person name="Holroyd S."/>
            <person name="Jagels K."/>
            <person name="James K.D."/>
            <person name="Lennard N."/>
            <person name="Line A."/>
            <person name="Mayes R."/>
            <person name="Moule S."/>
            <person name="Mungall K."/>
            <person name="Ormond D."/>
            <person name="Quail M.A."/>
            <person name="Rabbinowitsch E."/>
            <person name="Rutherford K.M."/>
            <person name="Sanders M."/>
            <person name="Sharp S."/>
            <person name="Simmonds M."/>
            <person name="Stevens K."/>
            <person name="Whitehead S."/>
            <person name="Barrell B.G."/>
            <person name="Spratt B.G."/>
            <person name="Parkhill J."/>
        </authorList>
    </citation>
    <scope>NUCLEOTIDE SEQUENCE [LARGE SCALE GENOMIC DNA]</scope>
    <source>
        <strain>MSSA476</strain>
    </source>
</reference>
<gene>
    <name evidence="2" type="primary">fda</name>
    <name type="ordered locus">SAS2491</name>
</gene>
<keyword id="KW-0324">Glycolysis</keyword>
<keyword id="KW-0456">Lyase</keyword>
<keyword id="KW-0704">Schiff base</keyword>
<comment type="catalytic activity">
    <reaction evidence="2">
        <text>beta-D-fructose 1,6-bisphosphate = D-glyceraldehyde 3-phosphate + dihydroxyacetone phosphate</text>
        <dbReference type="Rhea" id="RHEA:14729"/>
        <dbReference type="ChEBI" id="CHEBI:32966"/>
        <dbReference type="ChEBI" id="CHEBI:57642"/>
        <dbReference type="ChEBI" id="CHEBI:59776"/>
        <dbReference type="EC" id="4.1.2.13"/>
    </reaction>
</comment>
<comment type="pathway">
    <text evidence="2">Carbohydrate degradation; glycolysis; D-glyceraldehyde 3-phosphate and glycerone phosphate from D-glucose: step 4/4.</text>
</comment>
<comment type="similarity">
    <text evidence="2">Belongs to the class I fructose-bisphosphate aldolase family.</text>
</comment>
<feature type="initiator methionine" description="Removed" evidence="1">
    <location>
        <position position="1"/>
    </location>
</feature>
<feature type="chain" id="PRO_0000216907" description="Fructose-bisphosphate aldolase class 1">
    <location>
        <begin position="2"/>
        <end position="296"/>
    </location>
</feature>
<feature type="active site" description="Proton acceptor" evidence="2">
    <location>
        <position position="175"/>
    </location>
</feature>
<feature type="active site" description="Schiff-base intermediate with dihydroxyacetone-P" evidence="2">
    <location>
        <position position="212"/>
    </location>
</feature>
<protein>
    <recommendedName>
        <fullName evidence="2">Fructose-bisphosphate aldolase class 1</fullName>
        <ecNumber evidence="2">4.1.2.13</ecNumber>
    </recommendedName>
    <alternativeName>
        <fullName>Fructose-bisphosphate aldolase class I</fullName>
        <shortName evidence="2">FBP aldolase</shortName>
    </alternativeName>
</protein>